<comment type="function">
    <text evidence="1">Binds as a heterodimer with protein bS6 to the central domain of the 16S rRNA, where it helps stabilize the platform of the 30S subunit.</text>
</comment>
<comment type="subunit">
    <text evidence="1">Part of the 30S ribosomal subunit. Forms a tight heterodimer with protein bS6.</text>
</comment>
<comment type="similarity">
    <text evidence="1">Belongs to the bacterial ribosomal protein bS18 family.</text>
</comment>
<protein>
    <recommendedName>
        <fullName evidence="1">Small ribosomal subunit protein bS18A</fullName>
    </recommendedName>
    <alternativeName>
        <fullName evidence="2">30S ribosomal protein S18 1</fullName>
    </alternativeName>
</protein>
<accession>A4F7R8</accession>
<organism>
    <name type="scientific">Saccharopolyspora erythraea (strain ATCC 11635 / DSM 40517 / JCM 4748 / NBRC 13426 / NCIMB 8594 / NRRL 2338)</name>
    <dbReference type="NCBI Taxonomy" id="405948"/>
    <lineage>
        <taxon>Bacteria</taxon>
        <taxon>Bacillati</taxon>
        <taxon>Actinomycetota</taxon>
        <taxon>Actinomycetes</taxon>
        <taxon>Pseudonocardiales</taxon>
        <taxon>Pseudonocardiaceae</taxon>
        <taxon>Saccharopolyspora</taxon>
    </lineage>
</organism>
<reference key="1">
    <citation type="journal article" date="2007" name="Nat. Biotechnol.">
        <title>Complete genome sequence of the erythromycin-producing bacterium Saccharopolyspora erythraea NRRL23338.</title>
        <authorList>
            <person name="Oliynyk M."/>
            <person name="Samborskyy M."/>
            <person name="Lester J.B."/>
            <person name="Mironenko T."/>
            <person name="Scott N."/>
            <person name="Dickens S."/>
            <person name="Haydock S.F."/>
            <person name="Leadlay P.F."/>
        </authorList>
    </citation>
    <scope>NUCLEOTIDE SEQUENCE [LARGE SCALE GENOMIC DNA]</scope>
    <source>
        <strain>ATCC 11635 / DSM 40517 / JCM 4748 / NBRC 13426 / NCIMB 8594 / NRRL 2338</strain>
    </source>
</reference>
<proteinExistence type="inferred from homology"/>
<keyword id="KW-1185">Reference proteome</keyword>
<keyword id="KW-0687">Ribonucleoprotein</keyword>
<keyword id="KW-0689">Ribosomal protein</keyword>
<keyword id="KW-0694">RNA-binding</keyword>
<keyword id="KW-0699">rRNA-binding</keyword>
<feature type="chain" id="PRO_0000345542" description="Small ribosomal subunit protein bS18A">
    <location>
        <begin position="1"/>
        <end position="81"/>
    </location>
</feature>
<sequence>MRNEQRRGGQRRGKPNLLQRAGVVQVDWKDTDLLRRFISDRGKIRSRRVTGLTMQEQREVATAIKNAREMALLPYPAAAKR</sequence>
<name>RS181_SACEN</name>
<gene>
    <name evidence="1" type="primary">rpsR1</name>
    <name type="ordered locus">SACE_0751</name>
</gene>
<dbReference type="EMBL" id="AM420293">
    <property type="protein sequence ID" value="CAM00092.1"/>
    <property type="molecule type" value="Genomic_DNA"/>
</dbReference>
<dbReference type="RefSeq" id="WP_009950117.1">
    <property type="nucleotide sequence ID" value="NC_009142.1"/>
</dbReference>
<dbReference type="SMR" id="A4F7R8"/>
<dbReference type="STRING" id="405948.SACE_0751"/>
<dbReference type="KEGG" id="sen:SACE_0751"/>
<dbReference type="eggNOG" id="COG0238">
    <property type="taxonomic scope" value="Bacteria"/>
</dbReference>
<dbReference type="HOGENOM" id="CLU_148710_1_0_11"/>
<dbReference type="OrthoDB" id="9812008at2"/>
<dbReference type="Proteomes" id="UP000006728">
    <property type="component" value="Chromosome"/>
</dbReference>
<dbReference type="GO" id="GO:0022627">
    <property type="term" value="C:cytosolic small ribosomal subunit"/>
    <property type="evidence" value="ECO:0007669"/>
    <property type="project" value="TreeGrafter"/>
</dbReference>
<dbReference type="GO" id="GO:0070181">
    <property type="term" value="F:small ribosomal subunit rRNA binding"/>
    <property type="evidence" value="ECO:0007669"/>
    <property type="project" value="TreeGrafter"/>
</dbReference>
<dbReference type="GO" id="GO:0003735">
    <property type="term" value="F:structural constituent of ribosome"/>
    <property type="evidence" value="ECO:0007669"/>
    <property type="project" value="InterPro"/>
</dbReference>
<dbReference type="GO" id="GO:0006412">
    <property type="term" value="P:translation"/>
    <property type="evidence" value="ECO:0007669"/>
    <property type="project" value="UniProtKB-UniRule"/>
</dbReference>
<dbReference type="FunFam" id="4.10.640.10:FF:000016">
    <property type="entry name" value="30S ribosomal protein S18"/>
    <property type="match status" value="1"/>
</dbReference>
<dbReference type="Gene3D" id="4.10.640.10">
    <property type="entry name" value="Ribosomal protein S18"/>
    <property type="match status" value="1"/>
</dbReference>
<dbReference type="HAMAP" id="MF_00270">
    <property type="entry name" value="Ribosomal_bS18"/>
    <property type="match status" value="1"/>
</dbReference>
<dbReference type="InterPro" id="IPR001648">
    <property type="entry name" value="Ribosomal_bS18"/>
</dbReference>
<dbReference type="InterPro" id="IPR036870">
    <property type="entry name" value="Ribosomal_bS18_sf"/>
</dbReference>
<dbReference type="NCBIfam" id="TIGR00165">
    <property type="entry name" value="S18"/>
    <property type="match status" value="1"/>
</dbReference>
<dbReference type="PANTHER" id="PTHR13479">
    <property type="entry name" value="30S RIBOSOMAL PROTEIN S18"/>
    <property type="match status" value="1"/>
</dbReference>
<dbReference type="PANTHER" id="PTHR13479:SF40">
    <property type="entry name" value="SMALL RIBOSOMAL SUBUNIT PROTEIN BS18M"/>
    <property type="match status" value="1"/>
</dbReference>
<dbReference type="Pfam" id="PF01084">
    <property type="entry name" value="Ribosomal_S18"/>
    <property type="match status" value="1"/>
</dbReference>
<dbReference type="PRINTS" id="PR00974">
    <property type="entry name" value="RIBOSOMALS18"/>
</dbReference>
<dbReference type="SUPFAM" id="SSF46911">
    <property type="entry name" value="Ribosomal protein S18"/>
    <property type="match status" value="1"/>
</dbReference>
<evidence type="ECO:0000255" key="1">
    <source>
        <dbReference type="HAMAP-Rule" id="MF_00270"/>
    </source>
</evidence>
<evidence type="ECO:0000305" key="2"/>